<sequence length="319" mass="34284">MKRIGVLTSGGDSPGMNAAVRAVVRKAIYHDVEVYGIYNGYSGLISGKIEKLEIGSVGDIIHRGGTKLYTARCPEFKTVEGREKGIANLKKYGIEGLVVIGGDGSYMGAKKLTEHGFPCVGVPGTIDNDIPGTDLTIGFDTALNTVIDAIDKIRDTATSHERTYVIEVMGRHAGDIALWSGLAGGAESILIPEADYDMEEIIARLKRGHERGKKHSIIIVAEGVGSGVEFGKRIEEATNLETRVSVLGHIQRGGSPTAADRVLASRLGAFAVELLLEGKGGRCVGIQNNQLVHHDIIEILEQKHTIDQSMYRLSQELSI</sequence>
<reference key="1">
    <citation type="journal article" date="2004" name="J. Mol. Microbiol. Biotechnol.">
        <title>The complete genome sequence of Bacillus licheniformis DSM13, an organism with great industrial potential.</title>
        <authorList>
            <person name="Veith B."/>
            <person name="Herzberg C."/>
            <person name="Steckel S."/>
            <person name="Feesche J."/>
            <person name="Maurer K.H."/>
            <person name="Ehrenreich P."/>
            <person name="Baeumer S."/>
            <person name="Henne A."/>
            <person name="Liesegang H."/>
            <person name="Merkl R."/>
            <person name="Ehrenreich A."/>
            <person name="Gottschalk G."/>
        </authorList>
    </citation>
    <scope>NUCLEOTIDE SEQUENCE [LARGE SCALE GENOMIC DNA]</scope>
    <source>
        <strain>ATCC 14580 / DSM 13 / JCM 2505 / CCUG 7422 / NBRC 12200 / NCIMB 9375 / NCTC 10341 / NRRL NRS-1264 / Gibson 46</strain>
    </source>
</reference>
<reference key="2">
    <citation type="journal article" date="2004" name="Genome Biol.">
        <title>Complete genome sequence of the industrial bacterium Bacillus licheniformis and comparisons with closely related Bacillus species.</title>
        <authorList>
            <person name="Rey M.W."/>
            <person name="Ramaiya P."/>
            <person name="Nelson B.A."/>
            <person name="Brody-Karpin S.D."/>
            <person name="Zaretsky E.J."/>
            <person name="Tang M."/>
            <person name="Lopez de Leon A."/>
            <person name="Xiang H."/>
            <person name="Gusti V."/>
            <person name="Clausen I.G."/>
            <person name="Olsen P.B."/>
            <person name="Rasmussen M.D."/>
            <person name="Andersen J.T."/>
            <person name="Joergensen P.L."/>
            <person name="Larsen T.S."/>
            <person name="Sorokin A."/>
            <person name="Bolotin A."/>
            <person name="Lapidus A."/>
            <person name="Galleron N."/>
            <person name="Ehrlich S.D."/>
            <person name="Berka R.M."/>
        </authorList>
    </citation>
    <scope>NUCLEOTIDE SEQUENCE [LARGE SCALE GENOMIC DNA]</scope>
    <source>
        <strain>ATCC 14580 / DSM 13 / JCM 2505 / CCUG 7422 / NBRC 12200 / NCIMB 9375 / NCTC 10341 / NRRL NRS-1264 / Gibson 46</strain>
    </source>
</reference>
<evidence type="ECO:0000255" key="1">
    <source>
        <dbReference type="HAMAP-Rule" id="MF_00339"/>
    </source>
</evidence>
<protein>
    <recommendedName>
        <fullName evidence="1">ATP-dependent 6-phosphofructokinase</fullName>
        <shortName evidence="1">ATP-PFK</shortName>
        <shortName evidence="1">Phosphofructokinase</shortName>
        <ecNumber evidence="1">2.7.1.11</ecNumber>
    </recommendedName>
    <alternativeName>
        <fullName evidence="1">Phosphohexokinase</fullName>
    </alternativeName>
</protein>
<organism>
    <name type="scientific">Bacillus licheniformis (strain ATCC 14580 / DSM 13 / JCM 2505 / CCUG 7422 / NBRC 12200 / NCIMB 9375 / NCTC 10341 / NRRL NRS-1264 / Gibson 46)</name>
    <dbReference type="NCBI Taxonomy" id="279010"/>
    <lineage>
        <taxon>Bacteria</taxon>
        <taxon>Bacillati</taxon>
        <taxon>Bacillota</taxon>
        <taxon>Bacilli</taxon>
        <taxon>Bacillales</taxon>
        <taxon>Bacillaceae</taxon>
        <taxon>Bacillus</taxon>
    </lineage>
</organism>
<gene>
    <name evidence="1" type="primary">pfkA</name>
    <name type="ordered locus">BLi03068</name>
    <name type="ordered locus">BL00403</name>
</gene>
<comment type="function">
    <text evidence="1">Catalyzes the phosphorylation of D-fructose 6-phosphate to fructose 1,6-bisphosphate by ATP, the first committing step of glycolysis.</text>
</comment>
<comment type="catalytic activity">
    <reaction evidence="1">
        <text>beta-D-fructose 6-phosphate + ATP = beta-D-fructose 1,6-bisphosphate + ADP + H(+)</text>
        <dbReference type="Rhea" id="RHEA:16109"/>
        <dbReference type="ChEBI" id="CHEBI:15378"/>
        <dbReference type="ChEBI" id="CHEBI:30616"/>
        <dbReference type="ChEBI" id="CHEBI:32966"/>
        <dbReference type="ChEBI" id="CHEBI:57634"/>
        <dbReference type="ChEBI" id="CHEBI:456216"/>
        <dbReference type="EC" id="2.7.1.11"/>
    </reaction>
</comment>
<comment type="cofactor">
    <cofactor evidence="1">
        <name>Mg(2+)</name>
        <dbReference type="ChEBI" id="CHEBI:18420"/>
    </cofactor>
</comment>
<comment type="activity regulation">
    <text evidence="1">Allosterically activated by ADP and other diphosphonucleosides, and allosterically inhibited by phosphoenolpyruvate.</text>
</comment>
<comment type="pathway">
    <text evidence="1">Carbohydrate degradation; glycolysis; D-glyceraldehyde 3-phosphate and glycerone phosphate from D-glucose: step 3/4.</text>
</comment>
<comment type="subunit">
    <text evidence="1">Homotetramer.</text>
</comment>
<comment type="subcellular location">
    <subcellularLocation>
        <location evidence="1">Cytoplasm</location>
    </subcellularLocation>
</comment>
<comment type="similarity">
    <text evidence="1">Belongs to the phosphofructokinase type A (PFKA) family. ATP-dependent PFK group I subfamily. Prokaryotic clade 'B1' sub-subfamily.</text>
</comment>
<accession>Q65G82</accession>
<accession>Q62RN7</accession>
<name>PFKA_BACLD</name>
<feature type="chain" id="PRO_1000059744" description="ATP-dependent 6-phosphofructokinase">
    <location>
        <begin position="1"/>
        <end position="319"/>
    </location>
</feature>
<feature type="active site" description="Proton acceptor" evidence="1">
    <location>
        <position position="127"/>
    </location>
</feature>
<feature type="binding site" evidence="1">
    <location>
        <position position="11"/>
    </location>
    <ligand>
        <name>ATP</name>
        <dbReference type="ChEBI" id="CHEBI:30616"/>
    </ligand>
</feature>
<feature type="binding site" evidence="1">
    <location>
        <begin position="21"/>
        <end position="25"/>
    </location>
    <ligand>
        <name>ADP</name>
        <dbReference type="ChEBI" id="CHEBI:456216"/>
        <note>allosteric activator; ligand shared between dimeric partners</note>
    </ligand>
</feature>
<feature type="binding site" evidence="1">
    <location>
        <begin position="72"/>
        <end position="73"/>
    </location>
    <ligand>
        <name>ATP</name>
        <dbReference type="ChEBI" id="CHEBI:30616"/>
    </ligand>
</feature>
<feature type="binding site" evidence="1">
    <location>
        <begin position="102"/>
        <end position="105"/>
    </location>
    <ligand>
        <name>ATP</name>
        <dbReference type="ChEBI" id="CHEBI:30616"/>
    </ligand>
</feature>
<feature type="binding site" evidence="1">
    <location>
        <position position="103"/>
    </location>
    <ligand>
        <name>Mg(2+)</name>
        <dbReference type="ChEBI" id="CHEBI:18420"/>
        <note>catalytic</note>
    </ligand>
</feature>
<feature type="binding site" description="in other chain" evidence="1">
    <location>
        <begin position="125"/>
        <end position="127"/>
    </location>
    <ligand>
        <name>substrate</name>
        <note>ligand shared between dimeric partners</note>
    </ligand>
</feature>
<feature type="binding site" description="in other chain" evidence="1">
    <location>
        <position position="154"/>
    </location>
    <ligand>
        <name>ADP</name>
        <dbReference type="ChEBI" id="CHEBI:456216"/>
        <note>allosteric activator; ligand shared between dimeric partners</note>
    </ligand>
</feature>
<feature type="binding site" evidence="1">
    <location>
        <position position="162"/>
    </location>
    <ligand>
        <name>substrate</name>
        <note>ligand shared between dimeric partners</note>
    </ligand>
</feature>
<feature type="binding site" description="in other chain" evidence="1">
    <location>
        <begin position="169"/>
        <end position="171"/>
    </location>
    <ligand>
        <name>substrate</name>
        <note>ligand shared between dimeric partners</note>
    </ligand>
</feature>
<feature type="binding site" description="in other chain" evidence="1">
    <location>
        <begin position="185"/>
        <end position="187"/>
    </location>
    <ligand>
        <name>ADP</name>
        <dbReference type="ChEBI" id="CHEBI:456216"/>
        <note>allosteric activator; ligand shared between dimeric partners</note>
    </ligand>
</feature>
<feature type="binding site" description="in other chain" evidence="1">
    <location>
        <position position="211"/>
    </location>
    <ligand>
        <name>ADP</name>
        <dbReference type="ChEBI" id="CHEBI:456216"/>
        <note>allosteric activator; ligand shared between dimeric partners</note>
    </ligand>
</feature>
<feature type="binding site" description="in other chain" evidence="1">
    <location>
        <begin position="213"/>
        <end position="215"/>
    </location>
    <ligand>
        <name>ADP</name>
        <dbReference type="ChEBI" id="CHEBI:456216"/>
        <note>allosteric activator; ligand shared between dimeric partners</note>
    </ligand>
</feature>
<feature type="binding site" description="in other chain" evidence="1">
    <location>
        <position position="222"/>
    </location>
    <ligand>
        <name>substrate</name>
        <note>ligand shared between dimeric partners</note>
    </ligand>
</feature>
<feature type="binding site" evidence="1">
    <location>
        <position position="243"/>
    </location>
    <ligand>
        <name>substrate</name>
        <note>ligand shared between dimeric partners</note>
    </ligand>
</feature>
<feature type="binding site" description="in other chain" evidence="1">
    <location>
        <begin position="249"/>
        <end position="252"/>
    </location>
    <ligand>
        <name>substrate</name>
        <note>ligand shared between dimeric partners</note>
    </ligand>
</feature>
<keyword id="KW-0021">Allosteric enzyme</keyword>
<keyword id="KW-0067">ATP-binding</keyword>
<keyword id="KW-0963">Cytoplasm</keyword>
<keyword id="KW-0324">Glycolysis</keyword>
<keyword id="KW-0418">Kinase</keyword>
<keyword id="KW-0460">Magnesium</keyword>
<keyword id="KW-0479">Metal-binding</keyword>
<keyword id="KW-0547">Nucleotide-binding</keyword>
<keyword id="KW-1185">Reference proteome</keyword>
<keyword id="KW-0808">Transferase</keyword>
<proteinExistence type="inferred from homology"/>
<dbReference type="EC" id="2.7.1.11" evidence="1"/>
<dbReference type="EMBL" id="CP000002">
    <property type="protein sequence ID" value="AAU24573.2"/>
    <property type="molecule type" value="Genomic_DNA"/>
</dbReference>
<dbReference type="EMBL" id="AE017333">
    <property type="protein sequence ID" value="AAU41932.1"/>
    <property type="molecule type" value="Genomic_DNA"/>
</dbReference>
<dbReference type="RefSeq" id="WP_003184332.1">
    <property type="nucleotide sequence ID" value="NC_006322.1"/>
</dbReference>
<dbReference type="SMR" id="Q65G82"/>
<dbReference type="STRING" id="279010.BL00403"/>
<dbReference type="GeneID" id="92860340"/>
<dbReference type="KEGG" id="bld:BLi03068"/>
<dbReference type="KEGG" id="bli:BL00403"/>
<dbReference type="eggNOG" id="COG0205">
    <property type="taxonomic scope" value="Bacteria"/>
</dbReference>
<dbReference type="HOGENOM" id="CLU_020655_0_1_9"/>
<dbReference type="SABIO-RK" id="Q65G82"/>
<dbReference type="UniPathway" id="UPA00109">
    <property type="reaction ID" value="UER00182"/>
</dbReference>
<dbReference type="Proteomes" id="UP000000606">
    <property type="component" value="Chromosome"/>
</dbReference>
<dbReference type="GO" id="GO:0005945">
    <property type="term" value="C:6-phosphofructokinase complex"/>
    <property type="evidence" value="ECO:0007669"/>
    <property type="project" value="TreeGrafter"/>
</dbReference>
<dbReference type="GO" id="GO:0003872">
    <property type="term" value="F:6-phosphofructokinase activity"/>
    <property type="evidence" value="ECO:0007669"/>
    <property type="project" value="UniProtKB-UniRule"/>
</dbReference>
<dbReference type="GO" id="GO:0016208">
    <property type="term" value="F:AMP binding"/>
    <property type="evidence" value="ECO:0007669"/>
    <property type="project" value="TreeGrafter"/>
</dbReference>
<dbReference type="GO" id="GO:0005524">
    <property type="term" value="F:ATP binding"/>
    <property type="evidence" value="ECO:0007669"/>
    <property type="project" value="UniProtKB-KW"/>
</dbReference>
<dbReference type="GO" id="GO:0070095">
    <property type="term" value="F:fructose-6-phosphate binding"/>
    <property type="evidence" value="ECO:0007669"/>
    <property type="project" value="TreeGrafter"/>
</dbReference>
<dbReference type="GO" id="GO:0042802">
    <property type="term" value="F:identical protein binding"/>
    <property type="evidence" value="ECO:0007669"/>
    <property type="project" value="TreeGrafter"/>
</dbReference>
<dbReference type="GO" id="GO:0046872">
    <property type="term" value="F:metal ion binding"/>
    <property type="evidence" value="ECO:0007669"/>
    <property type="project" value="UniProtKB-KW"/>
</dbReference>
<dbReference type="GO" id="GO:0048029">
    <property type="term" value="F:monosaccharide binding"/>
    <property type="evidence" value="ECO:0007669"/>
    <property type="project" value="TreeGrafter"/>
</dbReference>
<dbReference type="GO" id="GO:0061621">
    <property type="term" value="P:canonical glycolysis"/>
    <property type="evidence" value="ECO:0007669"/>
    <property type="project" value="TreeGrafter"/>
</dbReference>
<dbReference type="GO" id="GO:0030388">
    <property type="term" value="P:fructose 1,6-bisphosphate metabolic process"/>
    <property type="evidence" value="ECO:0007669"/>
    <property type="project" value="TreeGrafter"/>
</dbReference>
<dbReference type="GO" id="GO:0006002">
    <property type="term" value="P:fructose 6-phosphate metabolic process"/>
    <property type="evidence" value="ECO:0007669"/>
    <property type="project" value="InterPro"/>
</dbReference>
<dbReference type="CDD" id="cd00763">
    <property type="entry name" value="Bacterial_PFK"/>
    <property type="match status" value="1"/>
</dbReference>
<dbReference type="FunFam" id="3.40.50.450:FF:000001">
    <property type="entry name" value="ATP-dependent 6-phosphofructokinase"/>
    <property type="match status" value="1"/>
</dbReference>
<dbReference type="FunFam" id="3.40.50.460:FF:000002">
    <property type="entry name" value="ATP-dependent 6-phosphofructokinase"/>
    <property type="match status" value="1"/>
</dbReference>
<dbReference type="Gene3D" id="3.40.50.450">
    <property type="match status" value="1"/>
</dbReference>
<dbReference type="Gene3D" id="3.40.50.460">
    <property type="entry name" value="Phosphofructokinase domain"/>
    <property type="match status" value="1"/>
</dbReference>
<dbReference type="HAMAP" id="MF_00339">
    <property type="entry name" value="Phosphofructokinase_I_B1"/>
    <property type="match status" value="1"/>
</dbReference>
<dbReference type="InterPro" id="IPR022953">
    <property type="entry name" value="ATP_PFK"/>
</dbReference>
<dbReference type="InterPro" id="IPR012003">
    <property type="entry name" value="ATP_PFK_prok-type"/>
</dbReference>
<dbReference type="InterPro" id="IPR012828">
    <property type="entry name" value="PFKA_ATP_prok"/>
</dbReference>
<dbReference type="InterPro" id="IPR015912">
    <property type="entry name" value="Phosphofructokinase_CS"/>
</dbReference>
<dbReference type="InterPro" id="IPR000023">
    <property type="entry name" value="Phosphofructokinase_dom"/>
</dbReference>
<dbReference type="InterPro" id="IPR035966">
    <property type="entry name" value="PKF_sf"/>
</dbReference>
<dbReference type="NCBIfam" id="TIGR02482">
    <property type="entry name" value="PFKA_ATP"/>
    <property type="match status" value="1"/>
</dbReference>
<dbReference type="NCBIfam" id="NF002872">
    <property type="entry name" value="PRK03202.1"/>
    <property type="match status" value="1"/>
</dbReference>
<dbReference type="PANTHER" id="PTHR13697:SF4">
    <property type="entry name" value="ATP-DEPENDENT 6-PHOSPHOFRUCTOKINASE"/>
    <property type="match status" value="1"/>
</dbReference>
<dbReference type="PANTHER" id="PTHR13697">
    <property type="entry name" value="PHOSPHOFRUCTOKINASE"/>
    <property type="match status" value="1"/>
</dbReference>
<dbReference type="Pfam" id="PF00365">
    <property type="entry name" value="PFK"/>
    <property type="match status" value="1"/>
</dbReference>
<dbReference type="PIRSF" id="PIRSF000532">
    <property type="entry name" value="ATP_PFK_prok"/>
    <property type="match status" value="1"/>
</dbReference>
<dbReference type="PRINTS" id="PR00476">
    <property type="entry name" value="PHFRCTKINASE"/>
</dbReference>
<dbReference type="SUPFAM" id="SSF53784">
    <property type="entry name" value="Phosphofructokinase"/>
    <property type="match status" value="1"/>
</dbReference>
<dbReference type="PROSITE" id="PS00433">
    <property type="entry name" value="PHOSPHOFRUCTOKINASE"/>
    <property type="match status" value="1"/>
</dbReference>